<name>ACTG_EMENI</name>
<keyword id="KW-0067">ATP-binding</keyword>
<keyword id="KW-0963">Cytoplasm</keyword>
<keyword id="KW-0206">Cytoskeleton</keyword>
<keyword id="KW-0378">Hydrolase</keyword>
<keyword id="KW-0547">Nucleotide-binding</keyword>
<keyword id="KW-1185">Reference proteome</keyword>
<sequence length="375" mass="41639">MEEEVAALVIDNGSGMCKAGFAGDDAPRAVFPSIVGRPRHHGIMIGMGQKDSYVGDEAQSKRGILTLRYPIEHGVVTNWDDMEKIWHHTFYNELRVAPEEHPVLLTEAPINPKSNREKMTQIVFETFNAPAFYVSIQAVLSLYASGRTTGIVLDSGDGVTHVVPIYEGFALPHAISRVDMAGRDLTDYLMKILAERGYTFSTTAEREIVRDIKEKLCYVALDFEQEIQTASQSSSLEKSYELPDGQVITIGNERFRAPEALFQPSVLGLESGGIHVTTFNSIMKCDVDVRKDLYGNIVMSGGTTMYPGISDRMQKEITALAPSSMKVKIIAPPERKYSVWIGGSILASLSTFQQMWISKQEYDESGPSIVHRKCF</sequence>
<organism>
    <name type="scientific">Emericella nidulans (strain FGSC A4 / ATCC 38163 / CBS 112.46 / NRRL 194 / M139)</name>
    <name type="common">Aspergillus nidulans</name>
    <dbReference type="NCBI Taxonomy" id="227321"/>
    <lineage>
        <taxon>Eukaryota</taxon>
        <taxon>Fungi</taxon>
        <taxon>Dikarya</taxon>
        <taxon>Ascomycota</taxon>
        <taxon>Pezizomycotina</taxon>
        <taxon>Eurotiomycetes</taxon>
        <taxon>Eurotiomycetidae</taxon>
        <taxon>Eurotiales</taxon>
        <taxon>Aspergillaceae</taxon>
        <taxon>Aspergillus</taxon>
        <taxon>Aspergillus subgen. Nidulantes</taxon>
    </lineage>
</organism>
<accession>P20359</accession>
<accession>C8V0S4</accession>
<accession>Q5AYT8</accession>
<dbReference type="EC" id="3.6.4.-" evidence="1"/>
<dbReference type="EMBL" id="M22869">
    <property type="protein sequence ID" value="AAA33290.1"/>
    <property type="molecule type" value="Genomic_DNA"/>
</dbReference>
<dbReference type="EMBL" id="AACD01000109">
    <property type="protein sequence ID" value="EAA57882.1"/>
    <property type="molecule type" value="Genomic_DNA"/>
</dbReference>
<dbReference type="EMBL" id="BN001301">
    <property type="protein sequence ID" value="CBF70950.1"/>
    <property type="molecule type" value="Genomic_DNA"/>
</dbReference>
<dbReference type="PIR" id="JT0385">
    <property type="entry name" value="JT0385"/>
</dbReference>
<dbReference type="RefSeq" id="XP_664146.1">
    <property type="nucleotide sequence ID" value="XM_659054.1"/>
</dbReference>
<dbReference type="SMR" id="P20359"/>
<dbReference type="FunCoup" id="P20359">
    <property type="interactions" value="1209"/>
</dbReference>
<dbReference type="STRING" id="227321.P20359"/>
<dbReference type="EnsemblFungi" id="CBF70950">
    <property type="protein sequence ID" value="CBF70950"/>
    <property type="gene ID" value="ANIA_06542"/>
</dbReference>
<dbReference type="KEGG" id="ani:ANIA_06542"/>
<dbReference type="VEuPathDB" id="FungiDB:AN6542"/>
<dbReference type="eggNOG" id="KOG0676">
    <property type="taxonomic scope" value="Eukaryota"/>
</dbReference>
<dbReference type="HOGENOM" id="CLU_027965_0_2_1"/>
<dbReference type="InParanoid" id="P20359"/>
<dbReference type="OMA" id="FHTTAER"/>
<dbReference type="OrthoDB" id="5132116at2759"/>
<dbReference type="Proteomes" id="UP000000560">
    <property type="component" value="Chromosome I"/>
</dbReference>
<dbReference type="GO" id="GO:0015629">
    <property type="term" value="C:actin cytoskeleton"/>
    <property type="evidence" value="ECO:0000318"/>
    <property type="project" value="GO_Central"/>
</dbReference>
<dbReference type="GO" id="GO:0005737">
    <property type="term" value="C:cytoplasm"/>
    <property type="evidence" value="ECO:0007669"/>
    <property type="project" value="UniProtKB-KW"/>
</dbReference>
<dbReference type="GO" id="GO:0001411">
    <property type="term" value="C:hyphal tip"/>
    <property type="evidence" value="ECO:0000315"/>
    <property type="project" value="AspGD"/>
</dbReference>
<dbReference type="GO" id="GO:0005524">
    <property type="term" value="F:ATP binding"/>
    <property type="evidence" value="ECO:0007669"/>
    <property type="project" value="UniProtKB-KW"/>
</dbReference>
<dbReference type="GO" id="GO:0016787">
    <property type="term" value="F:hydrolase activity"/>
    <property type="evidence" value="ECO:0007669"/>
    <property type="project" value="UniProtKB-KW"/>
</dbReference>
<dbReference type="CDD" id="cd10224">
    <property type="entry name" value="ASKHA_NBD_actin"/>
    <property type="match status" value="1"/>
</dbReference>
<dbReference type="FunFam" id="3.30.420.40:FF:000131">
    <property type="entry name" value="Actin, alpha skeletal muscle"/>
    <property type="match status" value="1"/>
</dbReference>
<dbReference type="FunFam" id="3.30.420.40:FF:000291">
    <property type="entry name" value="Actin, alpha skeletal muscle"/>
    <property type="match status" value="1"/>
</dbReference>
<dbReference type="FunFam" id="3.90.640.10:FF:000001">
    <property type="entry name" value="Actin, muscle"/>
    <property type="match status" value="1"/>
</dbReference>
<dbReference type="FunFam" id="3.30.420.40:FF:000058">
    <property type="entry name" value="Putative actin-related protein 5"/>
    <property type="match status" value="1"/>
</dbReference>
<dbReference type="Gene3D" id="3.30.420.40">
    <property type="match status" value="2"/>
</dbReference>
<dbReference type="Gene3D" id="3.90.640.10">
    <property type="entry name" value="Actin, Chain A, domain 4"/>
    <property type="match status" value="1"/>
</dbReference>
<dbReference type="InterPro" id="IPR004000">
    <property type="entry name" value="Actin"/>
</dbReference>
<dbReference type="InterPro" id="IPR020902">
    <property type="entry name" value="Actin/actin-like_CS"/>
</dbReference>
<dbReference type="InterPro" id="IPR004001">
    <property type="entry name" value="Actin_CS"/>
</dbReference>
<dbReference type="InterPro" id="IPR043129">
    <property type="entry name" value="ATPase_NBD"/>
</dbReference>
<dbReference type="PANTHER" id="PTHR11937">
    <property type="entry name" value="ACTIN"/>
    <property type="match status" value="1"/>
</dbReference>
<dbReference type="Pfam" id="PF00022">
    <property type="entry name" value="Actin"/>
    <property type="match status" value="1"/>
</dbReference>
<dbReference type="PRINTS" id="PR00190">
    <property type="entry name" value="ACTIN"/>
</dbReference>
<dbReference type="SMART" id="SM00268">
    <property type="entry name" value="ACTIN"/>
    <property type="match status" value="1"/>
</dbReference>
<dbReference type="SUPFAM" id="SSF53067">
    <property type="entry name" value="Actin-like ATPase domain"/>
    <property type="match status" value="2"/>
</dbReference>
<dbReference type="PROSITE" id="PS00406">
    <property type="entry name" value="ACTINS_1"/>
    <property type="match status" value="1"/>
</dbReference>
<dbReference type="PROSITE" id="PS00432">
    <property type="entry name" value="ACTINS_2"/>
    <property type="match status" value="1"/>
</dbReference>
<dbReference type="PROSITE" id="PS01132">
    <property type="entry name" value="ACTINS_ACT_LIKE"/>
    <property type="match status" value="1"/>
</dbReference>
<protein>
    <recommendedName>
        <fullName>Actin, gamma</fullName>
        <ecNumber evidence="1">3.6.4.-</ecNumber>
    </recommendedName>
</protein>
<comment type="function">
    <text>Actins are highly conserved proteins that are involved in various types of cell motility and are ubiquitously expressed in all eukaryotic cells.</text>
</comment>
<comment type="catalytic activity">
    <reaction evidence="1">
        <text>ATP + H2O = ADP + phosphate + H(+)</text>
        <dbReference type="Rhea" id="RHEA:13065"/>
        <dbReference type="ChEBI" id="CHEBI:15377"/>
        <dbReference type="ChEBI" id="CHEBI:15378"/>
        <dbReference type="ChEBI" id="CHEBI:30616"/>
        <dbReference type="ChEBI" id="CHEBI:43474"/>
        <dbReference type="ChEBI" id="CHEBI:456216"/>
    </reaction>
</comment>
<comment type="subcellular location">
    <subcellularLocation>
        <location>Cytoplasm</location>
        <location>Cytoskeleton</location>
    </subcellularLocation>
</comment>
<comment type="similarity">
    <text evidence="2">Belongs to the actin family.</text>
</comment>
<evidence type="ECO:0000250" key="1">
    <source>
        <dbReference type="UniProtKB" id="P60010"/>
    </source>
</evidence>
<evidence type="ECO:0000305" key="2"/>
<proteinExistence type="inferred from homology"/>
<reference key="1">
    <citation type="journal article" date="1988" name="Gene">
        <title>Aspergillus nidulans contains a single actin gene which has unique intron locations and encodes a gamma-actin.</title>
        <authorList>
            <person name="Fidel S."/>
            <person name="Doonan J.H."/>
            <person name="Morris N.R."/>
        </authorList>
    </citation>
    <scope>NUCLEOTIDE SEQUENCE [GENOMIC DNA]</scope>
</reference>
<reference key="2">
    <citation type="journal article" date="2005" name="Nature">
        <title>Sequencing of Aspergillus nidulans and comparative analysis with A. fumigatus and A. oryzae.</title>
        <authorList>
            <person name="Galagan J.E."/>
            <person name="Calvo S.E."/>
            <person name="Cuomo C."/>
            <person name="Ma L.-J."/>
            <person name="Wortman J.R."/>
            <person name="Batzoglou S."/>
            <person name="Lee S.-I."/>
            <person name="Bastuerkmen M."/>
            <person name="Spevak C.C."/>
            <person name="Clutterbuck J."/>
            <person name="Kapitonov V."/>
            <person name="Jurka J."/>
            <person name="Scazzocchio C."/>
            <person name="Farman M.L."/>
            <person name="Butler J."/>
            <person name="Purcell S."/>
            <person name="Harris S."/>
            <person name="Braus G.H."/>
            <person name="Draht O."/>
            <person name="Busch S."/>
            <person name="D'Enfert C."/>
            <person name="Bouchier C."/>
            <person name="Goldman G.H."/>
            <person name="Bell-Pedersen D."/>
            <person name="Griffiths-Jones S."/>
            <person name="Doonan J.H."/>
            <person name="Yu J."/>
            <person name="Vienken K."/>
            <person name="Pain A."/>
            <person name="Freitag M."/>
            <person name="Selker E.U."/>
            <person name="Archer D.B."/>
            <person name="Penalva M.A."/>
            <person name="Oakley B.R."/>
            <person name="Momany M."/>
            <person name="Tanaka T."/>
            <person name="Kumagai T."/>
            <person name="Asai K."/>
            <person name="Machida M."/>
            <person name="Nierman W.C."/>
            <person name="Denning D.W."/>
            <person name="Caddick M.X."/>
            <person name="Hynes M."/>
            <person name="Paoletti M."/>
            <person name="Fischer R."/>
            <person name="Miller B.L."/>
            <person name="Dyer P.S."/>
            <person name="Sachs M.S."/>
            <person name="Osmani S.A."/>
            <person name="Birren B.W."/>
        </authorList>
    </citation>
    <scope>NUCLEOTIDE SEQUENCE [LARGE SCALE GENOMIC DNA]</scope>
    <source>
        <strain>FGSC A4 / ATCC 38163 / CBS 112.46 / NRRL 194 / M139</strain>
    </source>
</reference>
<reference key="3">
    <citation type="journal article" date="2009" name="Fungal Genet. Biol.">
        <title>The 2008 update of the Aspergillus nidulans genome annotation: a community effort.</title>
        <authorList>
            <person name="Wortman J.R."/>
            <person name="Gilsenan J.M."/>
            <person name="Joardar V."/>
            <person name="Deegan J."/>
            <person name="Clutterbuck J."/>
            <person name="Andersen M.R."/>
            <person name="Archer D."/>
            <person name="Bencina M."/>
            <person name="Braus G."/>
            <person name="Coutinho P."/>
            <person name="von Dohren H."/>
            <person name="Doonan J."/>
            <person name="Driessen A.J."/>
            <person name="Durek P."/>
            <person name="Espeso E."/>
            <person name="Fekete E."/>
            <person name="Flipphi M."/>
            <person name="Estrada C.G."/>
            <person name="Geysens S."/>
            <person name="Goldman G."/>
            <person name="de Groot P.W."/>
            <person name="Hansen K."/>
            <person name="Harris S.D."/>
            <person name="Heinekamp T."/>
            <person name="Helmstaedt K."/>
            <person name="Henrissat B."/>
            <person name="Hofmann G."/>
            <person name="Homan T."/>
            <person name="Horio T."/>
            <person name="Horiuchi H."/>
            <person name="James S."/>
            <person name="Jones M."/>
            <person name="Karaffa L."/>
            <person name="Karanyi Z."/>
            <person name="Kato M."/>
            <person name="Keller N."/>
            <person name="Kelly D.E."/>
            <person name="Kiel J.A."/>
            <person name="Kim J.M."/>
            <person name="van der Klei I.J."/>
            <person name="Klis F.M."/>
            <person name="Kovalchuk A."/>
            <person name="Krasevec N."/>
            <person name="Kubicek C.P."/>
            <person name="Liu B."/>
            <person name="Maccabe A."/>
            <person name="Meyer V."/>
            <person name="Mirabito P."/>
            <person name="Miskei M."/>
            <person name="Mos M."/>
            <person name="Mullins J."/>
            <person name="Nelson D.R."/>
            <person name="Nielsen J."/>
            <person name="Oakley B.R."/>
            <person name="Osmani S.A."/>
            <person name="Pakula T."/>
            <person name="Paszewski A."/>
            <person name="Paulsen I."/>
            <person name="Pilsyk S."/>
            <person name="Pocsi I."/>
            <person name="Punt P.J."/>
            <person name="Ram A.F."/>
            <person name="Ren Q."/>
            <person name="Robellet X."/>
            <person name="Robson G."/>
            <person name="Seiboth B."/>
            <person name="van Solingen P."/>
            <person name="Specht T."/>
            <person name="Sun J."/>
            <person name="Taheri-Talesh N."/>
            <person name="Takeshita N."/>
            <person name="Ussery D."/>
            <person name="vanKuyk P.A."/>
            <person name="Visser H."/>
            <person name="van de Vondervoort P.J."/>
            <person name="de Vries R.P."/>
            <person name="Walton J."/>
            <person name="Xiang X."/>
            <person name="Xiong Y."/>
            <person name="Zeng A.P."/>
            <person name="Brandt B.W."/>
            <person name="Cornell M.J."/>
            <person name="van den Hondel C.A."/>
            <person name="Visser J."/>
            <person name="Oliver S.G."/>
            <person name="Turner G."/>
        </authorList>
    </citation>
    <scope>GENOME REANNOTATION</scope>
    <source>
        <strain>FGSC A4 / ATCC 38163 / CBS 112.46 / NRRL 194 / M139</strain>
    </source>
</reference>
<feature type="chain" id="PRO_0000088936" description="Actin, gamma">
    <location>
        <begin position="1"/>
        <end position="375"/>
    </location>
</feature>
<feature type="sequence conflict" description="In Ref. 1; AAA33290." evidence="2" ref="1">
    <original>A</original>
    <variation>V</variation>
    <location>
        <position position="129"/>
    </location>
</feature>
<feature type="sequence conflict" description="In Ref. 1; AAA33290." evidence="2" ref="1">
    <original>E</original>
    <variation>K</variation>
    <location>
        <position position="259"/>
    </location>
</feature>
<feature type="sequence conflict" description="In Ref. 1; AAA33290." evidence="2" ref="1">
    <original>M</original>
    <variation>I</variation>
    <location>
        <position position="283"/>
    </location>
</feature>
<gene>
    <name type="primary">acnA</name>
    <name type="ORF">AN6542</name>
</gene>